<dbReference type="EMBL" id="FC630769">
    <property type="status" value="NOT_ANNOTATED_CDS"/>
    <property type="molecule type" value="mRNA"/>
</dbReference>
<dbReference type="RefSeq" id="XP_009050636.1">
    <property type="nucleotide sequence ID" value="XM_009052388.1"/>
</dbReference>
<dbReference type="EnsemblMetazoa" id="LotgiT238970">
    <property type="protein sequence ID" value="LotgiP238970"/>
    <property type="gene ID" value="LotgiG238970"/>
</dbReference>
<dbReference type="GeneID" id="20250909"/>
<dbReference type="KEGG" id="lgi:LOTGIDRAFT_238970"/>
<dbReference type="CTD" id="20250909"/>
<dbReference type="HOGENOM" id="CLU_2040710_0_0_1"/>
<dbReference type="OMA" id="ICACAVA"/>
<dbReference type="GO" id="GO:0005576">
    <property type="term" value="C:extracellular region"/>
    <property type="evidence" value="ECO:0007669"/>
    <property type="project" value="UniProtKB-SubCell"/>
</dbReference>
<dbReference type="Gene3D" id="4.10.40.20">
    <property type="match status" value="1"/>
</dbReference>
<dbReference type="InterPro" id="IPR009030">
    <property type="entry name" value="Growth_fac_rcpt_cys_sf"/>
</dbReference>
<dbReference type="InterPro" id="IPR000867">
    <property type="entry name" value="IGFBP-like"/>
</dbReference>
<dbReference type="InterPro" id="IPR017891">
    <property type="entry name" value="Insulin_GF-bd_Cys-rich_CS"/>
</dbReference>
<dbReference type="SUPFAM" id="SSF57184">
    <property type="entry name" value="Growth factor receptor domain"/>
    <property type="match status" value="1"/>
</dbReference>
<dbReference type="PROSITE" id="PS00222">
    <property type="entry name" value="IGFBP_N_1"/>
    <property type="match status" value="1"/>
</dbReference>
<dbReference type="PROSITE" id="PS51323">
    <property type="entry name" value="IGFBP_N_2"/>
    <property type="match status" value="1"/>
</dbReference>
<reference evidence="5" key="1">
    <citation type="submission" date="2007-12" db="EMBL/GenBank/DDBJ databases">
        <title>DOE Joint Genome Institute Lottia gigantea EST project.</title>
        <authorList>
            <person name="Richardson P."/>
            <person name="Lucas S."/>
            <person name="Rokhsar D."/>
            <person name="Wang M."/>
            <person name="Lindquist E.A."/>
        </authorList>
    </citation>
    <scope>NUCLEOTIDE SEQUENCE [LARGE SCALE MRNA]</scope>
    <scope>IDENTIFICATION</scope>
    <source>
        <tissue evidence="4">Mantle</tissue>
    </source>
</reference>
<reference key="2">
    <citation type="journal article" date="2013" name="FEBS J.">
        <title>The shell-forming proteome of Lottia gigantea reveals both deep conservations and lineage-specific novelties.</title>
        <authorList>
            <person name="Marie B."/>
            <person name="Jackson D.J."/>
            <person name="Ramos-Silva P."/>
            <person name="Zanella-Cleon I."/>
            <person name="Guichard N."/>
            <person name="Marin F."/>
        </authorList>
    </citation>
    <scope>PROTEIN SEQUENCE OF 36-98</scope>
    <scope>SUBCELLULAR LOCATION</scope>
    <scope>TISSUE SPECIFICITY</scope>
    <source>
        <tissue>Shell</tissue>
    </source>
</reference>
<sequence length="121" mass="13822">MKFGVGFLLSCLVALNTVQNMLALSCLPCDFDTLKCSPLPDDDDCFPAYTPCGCCPQCAGEEDDFCDNFTVRCHPDLVCVNATGFEKKFVYWYEFDFKGTCQESELETEYEYEYEENETKK</sequence>
<proteinExistence type="evidence at protein level"/>
<keyword id="KW-0903">Direct protein sequencing</keyword>
<keyword id="KW-1015">Disulfide bond</keyword>
<keyword id="KW-0325">Glycoprotein</keyword>
<keyword id="KW-0964">Secreted</keyword>
<keyword id="KW-0732">Signal</keyword>
<evidence type="ECO:0000255" key="1"/>
<evidence type="ECO:0000255" key="2">
    <source>
        <dbReference type="PROSITE-ProRule" id="PRU00653"/>
    </source>
</evidence>
<evidence type="ECO:0000269" key="3">
    <source>
    </source>
</evidence>
<evidence type="ECO:0000269" key="4">
    <source ref="1"/>
</evidence>
<evidence type="ECO:0000305" key="5"/>
<name>PLSLP_LOTGI</name>
<feature type="signal peptide" evidence="1">
    <location>
        <begin position="1"/>
        <end position="23"/>
    </location>
</feature>
<feature type="chain" id="PRO_0000415259" description="Perlustrin-like protein" evidence="1">
    <location>
        <begin position="24"/>
        <end position="121"/>
    </location>
</feature>
<feature type="domain" description="IGFBP N-terminal" evidence="2">
    <location>
        <begin position="24"/>
        <end position="104"/>
    </location>
</feature>
<feature type="glycosylation site" description="N-linked (GlcNAc...) asparagine" evidence="1">
    <location>
        <position position="68"/>
    </location>
</feature>
<feature type="glycosylation site" description="N-linked (GlcNAc...) asparagine" evidence="1">
    <location>
        <position position="81"/>
    </location>
</feature>
<feature type="glycosylation site" description="N-linked (GlcNAc...) asparagine" evidence="1">
    <location>
        <position position="117"/>
    </location>
</feature>
<feature type="disulfide bond" evidence="2">
    <location>
        <begin position="26"/>
        <end position="52"/>
    </location>
</feature>
<feature type="disulfide bond" evidence="2">
    <location>
        <begin position="29"/>
        <end position="54"/>
    </location>
</feature>
<feature type="disulfide bond" evidence="2">
    <location>
        <begin position="36"/>
        <end position="55"/>
    </location>
</feature>
<feature type="disulfide bond" evidence="2">
    <location>
        <begin position="45"/>
        <end position="58"/>
    </location>
</feature>
<feature type="disulfide bond" evidence="2">
    <location>
        <begin position="66"/>
        <end position="79"/>
    </location>
</feature>
<feature type="disulfide bond" evidence="2">
    <location>
        <begin position="73"/>
        <end position="101"/>
    </location>
</feature>
<accession>B3A0Q9</accession>
<organism>
    <name type="scientific">Lottia gigantea</name>
    <name type="common">Giant owl limpet</name>
    <dbReference type="NCBI Taxonomy" id="225164"/>
    <lineage>
        <taxon>Eukaryota</taxon>
        <taxon>Metazoa</taxon>
        <taxon>Spiralia</taxon>
        <taxon>Lophotrochozoa</taxon>
        <taxon>Mollusca</taxon>
        <taxon>Gastropoda</taxon>
        <taxon>Patellogastropoda</taxon>
        <taxon>Lottioidea</taxon>
        <taxon>Lottiidae</taxon>
        <taxon>Lottia</taxon>
    </lineage>
</organism>
<comment type="subcellular location">
    <subcellularLocation>
        <location evidence="3">Secreted</location>
    </subcellularLocation>
</comment>
<comment type="tissue specificity">
    <text evidence="3">Component of the acid-insoluble organic matrix of calcified layers of the shell (at protein level).</text>
</comment>
<protein>
    <recommendedName>
        <fullName>Perlustrin-like protein</fullName>
    </recommendedName>
</protein>